<reference key="1">
    <citation type="submission" date="2007-10" db="EMBL/GenBank/DDBJ databases">
        <title>Complete genome of Alkaliphilus oremlandii OhILAs.</title>
        <authorList>
            <person name="Copeland A."/>
            <person name="Lucas S."/>
            <person name="Lapidus A."/>
            <person name="Barry K."/>
            <person name="Detter J.C."/>
            <person name="Glavina del Rio T."/>
            <person name="Hammon N."/>
            <person name="Israni S."/>
            <person name="Dalin E."/>
            <person name="Tice H."/>
            <person name="Pitluck S."/>
            <person name="Chain P."/>
            <person name="Malfatti S."/>
            <person name="Shin M."/>
            <person name="Vergez L."/>
            <person name="Schmutz J."/>
            <person name="Larimer F."/>
            <person name="Land M."/>
            <person name="Hauser L."/>
            <person name="Kyrpides N."/>
            <person name="Mikhailova N."/>
            <person name="Stolz J.F."/>
            <person name="Dawson A."/>
            <person name="Fisher E."/>
            <person name="Crable B."/>
            <person name="Perera E."/>
            <person name="Lisak J."/>
            <person name="Ranganathan M."/>
            <person name="Basu P."/>
            <person name="Richardson P."/>
        </authorList>
    </citation>
    <scope>NUCLEOTIDE SEQUENCE [LARGE SCALE GENOMIC DNA]</scope>
    <source>
        <strain>OhILAs</strain>
    </source>
</reference>
<organism>
    <name type="scientific">Alkaliphilus oremlandii (strain OhILAs)</name>
    <name type="common">Clostridium oremlandii (strain OhILAs)</name>
    <dbReference type="NCBI Taxonomy" id="350688"/>
    <lineage>
        <taxon>Bacteria</taxon>
        <taxon>Bacillati</taxon>
        <taxon>Bacillota</taxon>
        <taxon>Clostridia</taxon>
        <taxon>Peptostreptococcales</taxon>
        <taxon>Natronincolaceae</taxon>
        <taxon>Alkaliphilus</taxon>
    </lineage>
</organism>
<accession>A8MG57</accession>
<keyword id="KW-1185">Reference proteome</keyword>
<keyword id="KW-0687">Ribonucleoprotein</keyword>
<keyword id="KW-0689">Ribosomal protein</keyword>
<dbReference type="EMBL" id="CP000853">
    <property type="protein sequence ID" value="ABW18785.1"/>
    <property type="molecule type" value="Genomic_DNA"/>
</dbReference>
<dbReference type="RefSeq" id="WP_012159097.1">
    <property type="nucleotide sequence ID" value="NC_009922.1"/>
</dbReference>
<dbReference type="SMR" id="A8MG57"/>
<dbReference type="STRING" id="350688.Clos_1239"/>
<dbReference type="KEGG" id="aoe:Clos_1239"/>
<dbReference type="eggNOG" id="COG0828">
    <property type="taxonomic scope" value="Bacteria"/>
</dbReference>
<dbReference type="HOGENOM" id="CLU_159258_1_2_9"/>
<dbReference type="OrthoDB" id="9799244at2"/>
<dbReference type="Proteomes" id="UP000000269">
    <property type="component" value="Chromosome"/>
</dbReference>
<dbReference type="GO" id="GO:1990904">
    <property type="term" value="C:ribonucleoprotein complex"/>
    <property type="evidence" value="ECO:0007669"/>
    <property type="project" value="UniProtKB-KW"/>
</dbReference>
<dbReference type="GO" id="GO:0005840">
    <property type="term" value="C:ribosome"/>
    <property type="evidence" value="ECO:0007669"/>
    <property type="project" value="UniProtKB-KW"/>
</dbReference>
<dbReference type="GO" id="GO:0003735">
    <property type="term" value="F:structural constituent of ribosome"/>
    <property type="evidence" value="ECO:0007669"/>
    <property type="project" value="InterPro"/>
</dbReference>
<dbReference type="GO" id="GO:0006412">
    <property type="term" value="P:translation"/>
    <property type="evidence" value="ECO:0007669"/>
    <property type="project" value="UniProtKB-UniRule"/>
</dbReference>
<dbReference type="Gene3D" id="1.20.5.1150">
    <property type="entry name" value="Ribosomal protein S8"/>
    <property type="match status" value="1"/>
</dbReference>
<dbReference type="HAMAP" id="MF_00358">
    <property type="entry name" value="Ribosomal_bS21"/>
    <property type="match status" value="1"/>
</dbReference>
<dbReference type="InterPro" id="IPR001911">
    <property type="entry name" value="Ribosomal_bS21"/>
</dbReference>
<dbReference type="InterPro" id="IPR018278">
    <property type="entry name" value="Ribosomal_bS21_CS"/>
</dbReference>
<dbReference type="InterPro" id="IPR038380">
    <property type="entry name" value="Ribosomal_bS21_sf"/>
</dbReference>
<dbReference type="NCBIfam" id="TIGR00030">
    <property type="entry name" value="S21p"/>
    <property type="match status" value="1"/>
</dbReference>
<dbReference type="PANTHER" id="PTHR21109">
    <property type="entry name" value="MITOCHONDRIAL 28S RIBOSOMAL PROTEIN S21"/>
    <property type="match status" value="1"/>
</dbReference>
<dbReference type="PANTHER" id="PTHR21109:SF22">
    <property type="entry name" value="SMALL RIBOSOMAL SUBUNIT PROTEIN BS21"/>
    <property type="match status" value="1"/>
</dbReference>
<dbReference type="Pfam" id="PF01165">
    <property type="entry name" value="Ribosomal_S21"/>
    <property type="match status" value="1"/>
</dbReference>
<dbReference type="PRINTS" id="PR00976">
    <property type="entry name" value="RIBOSOMALS21"/>
</dbReference>
<dbReference type="PROSITE" id="PS01181">
    <property type="entry name" value="RIBOSOMAL_S21"/>
    <property type="match status" value="1"/>
</dbReference>
<comment type="similarity">
    <text evidence="1">Belongs to the bacterial ribosomal protein bS21 family.</text>
</comment>
<feature type="chain" id="PRO_1000059843" description="Small ribosomal subunit protein bS21">
    <location>
        <begin position="1"/>
        <end position="59"/>
    </location>
</feature>
<feature type="region of interest" description="Disordered" evidence="2">
    <location>
        <begin position="36"/>
        <end position="59"/>
    </location>
</feature>
<feature type="compositionally biased region" description="Basic residues" evidence="2">
    <location>
        <begin position="43"/>
        <end position="59"/>
    </location>
</feature>
<protein>
    <recommendedName>
        <fullName evidence="1">Small ribosomal subunit protein bS21</fullName>
    </recommendedName>
    <alternativeName>
        <fullName evidence="3">30S ribosomal protein S21</fullName>
    </alternativeName>
</protein>
<sequence>MSEIKIRENESLDNALRRFKRQCAKSGILSEVRKREHYEKPSVKRKKKAEAAKRNKSKF</sequence>
<proteinExistence type="inferred from homology"/>
<gene>
    <name evidence="1" type="primary">rpsU</name>
    <name type="ordered locus">Clos_1239</name>
</gene>
<evidence type="ECO:0000255" key="1">
    <source>
        <dbReference type="HAMAP-Rule" id="MF_00358"/>
    </source>
</evidence>
<evidence type="ECO:0000256" key="2">
    <source>
        <dbReference type="SAM" id="MobiDB-lite"/>
    </source>
</evidence>
<evidence type="ECO:0000305" key="3"/>
<name>RS21_ALKOO</name>